<sequence length="130" mass="14989">MRHRNGLRKLNRTSSHRLAMFRNLTNSLLEHEIIKTTLPKAKELRRVVEPVITLGKNPTLASKRLAFDRLRNRENVVKIFSELGPRYQNRNGGYLRILKCGFRKGDNAPMAIVELLDRSEANNDIVNIAE</sequence>
<reference key="1">
    <citation type="journal article" date="2007" name="Environ. Microbiol.">
        <title>Whole-genome analysis of the ammonia-oxidizing bacterium, Nitrosomonas eutropha C91: implications for niche adaptation.</title>
        <authorList>
            <person name="Stein L.Y."/>
            <person name="Arp D.J."/>
            <person name="Berube P.M."/>
            <person name="Chain P.S."/>
            <person name="Hauser L."/>
            <person name="Jetten M.S."/>
            <person name="Klotz M.G."/>
            <person name="Larimer F.W."/>
            <person name="Norton J.M."/>
            <person name="Op den Camp H.J.M."/>
            <person name="Shin M."/>
            <person name="Wei X."/>
        </authorList>
    </citation>
    <scope>NUCLEOTIDE SEQUENCE [LARGE SCALE GENOMIC DNA]</scope>
    <source>
        <strain>DSM 101675 / C91 / Nm57</strain>
    </source>
</reference>
<proteinExistence type="inferred from homology"/>
<evidence type="ECO:0000255" key="1">
    <source>
        <dbReference type="HAMAP-Rule" id="MF_01368"/>
    </source>
</evidence>
<evidence type="ECO:0000305" key="2"/>
<protein>
    <recommendedName>
        <fullName evidence="1">Large ribosomal subunit protein bL17</fullName>
    </recommendedName>
    <alternativeName>
        <fullName evidence="2">50S ribosomal protein L17</fullName>
    </alternativeName>
</protein>
<name>RL17_NITEC</name>
<gene>
    <name evidence="1" type="primary">rplQ</name>
    <name type="ordered locus">Neut_0584</name>
</gene>
<organism>
    <name type="scientific">Nitrosomonas eutropha (strain DSM 101675 / C91 / Nm57)</name>
    <dbReference type="NCBI Taxonomy" id="335283"/>
    <lineage>
        <taxon>Bacteria</taxon>
        <taxon>Pseudomonadati</taxon>
        <taxon>Pseudomonadota</taxon>
        <taxon>Betaproteobacteria</taxon>
        <taxon>Nitrosomonadales</taxon>
        <taxon>Nitrosomonadaceae</taxon>
        <taxon>Nitrosomonas</taxon>
    </lineage>
</organism>
<accession>Q0AIH0</accession>
<feature type="chain" id="PRO_1000055891" description="Large ribosomal subunit protein bL17">
    <location>
        <begin position="1"/>
        <end position="130"/>
    </location>
</feature>
<dbReference type="EMBL" id="CP000450">
    <property type="protein sequence ID" value="ABI58856.1"/>
    <property type="molecule type" value="Genomic_DNA"/>
</dbReference>
<dbReference type="RefSeq" id="WP_011633697.1">
    <property type="nucleotide sequence ID" value="NC_008344.1"/>
</dbReference>
<dbReference type="SMR" id="Q0AIH0"/>
<dbReference type="STRING" id="335283.Neut_0584"/>
<dbReference type="KEGG" id="net:Neut_0584"/>
<dbReference type="eggNOG" id="COG0203">
    <property type="taxonomic scope" value="Bacteria"/>
</dbReference>
<dbReference type="HOGENOM" id="CLU_074407_2_0_4"/>
<dbReference type="OrthoDB" id="9809073at2"/>
<dbReference type="Proteomes" id="UP000001966">
    <property type="component" value="Chromosome"/>
</dbReference>
<dbReference type="GO" id="GO:0022625">
    <property type="term" value="C:cytosolic large ribosomal subunit"/>
    <property type="evidence" value="ECO:0007669"/>
    <property type="project" value="TreeGrafter"/>
</dbReference>
<dbReference type="GO" id="GO:0003735">
    <property type="term" value="F:structural constituent of ribosome"/>
    <property type="evidence" value="ECO:0007669"/>
    <property type="project" value="InterPro"/>
</dbReference>
<dbReference type="GO" id="GO:0006412">
    <property type="term" value="P:translation"/>
    <property type="evidence" value="ECO:0007669"/>
    <property type="project" value="UniProtKB-UniRule"/>
</dbReference>
<dbReference type="FunFam" id="3.90.1030.10:FF:000001">
    <property type="entry name" value="50S ribosomal protein L17"/>
    <property type="match status" value="1"/>
</dbReference>
<dbReference type="Gene3D" id="3.90.1030.10">
    <property type="entry name" value="Ribosomal protein L17"/>
    <property type="match status" value="1"/>
</dbReference>
<dbReference type="HAMAP" id="MF_01368">
    <property type="entry name" value="Ribosomal_bL17"/>
    <property type="match status" value="1"/>
</dbReference>
<dbReference type="InterPro" id="IPR000456">
    <property type="entry name" value="Ribosomal_bL17"/>
</dbReference>
<dbReference type="InterPro" id="IPR047859">
    <property type="entry name" value="Ribosomal_bL17_CS"/>
</dbReference>
<dbReference type="InterPro" id="IPR036373">
    <property type="entry name" value="Ribosomal_bL17_sf"/>
</dbReference>
<dbReference type="NCBIfam" id="TIGR00059">
    <property type="entry name" value="L17"/>
    <property type="match status" value="1"/>
</dbReference>
<dbReference type="PANTHER" id="PTHR14413:SF16">
    <property type="entry name" value="LARGE RIBOSOMAL SUBUNIT PROTEIN BL17M"/>
    <property type="match status" value="1"/>
</dbReference>
<dbReference type="PANTHER" id="PTHR14413">
    <property type="entry name" value="RIBOSOMAL PROTEIN L17"/>
    <property type="match status" value="1"/>
</dbReference>
<dbReference type="Pfam" id="PF01196">
    <property type="entry name" value="Ribosomal_L17"/>
    <property type="match status" value="1"/>
</dbReference>
<dbReference type="SUPFAM" id="SSF64263">
    <property type="entry name" value="Prokaryotic ribosomal protein L17"/>
    <property type="match status" value="1"/>
</dbReference>
<dbReference type="PROSITE" id="PS01167">
    <property type="entry name" value="RIBOSOMAL_L17"/>
    <property type="match status" value="1"/>
</dbReference>
<keyword id="KW-0687">Ribonucleoprotein</keyword>
<keyword id="KW-0689">Ribosomal protein</keyword>
<comment type="subunit">
    <text evidence="1">Part of the 50S ribosomal subunit. Contacts protein L32.</text>
</comment>
<comment type="similarity">
    <text evidence="1">Belongs to the bacterial ribosomal protein bL17 family.</text>
</comment>